<sequence>MIGLVGKKVGMTRIFTEDGVSIPVTVIEIEANRVTQVKSLENDGYRAVQVTTGAKKANRVTKPEAGHFAKAGVEAGRGLWEFRLPEGQEFTAGQEISVEIFADVKKVDVTGTSKGKGFAGTVKRWNFRTQDATHGNSLSHRVPGSIGQNQTPGKVFKGKKMAGHMGDERVTVQSLDVVRVDAERNLLLVKGAVPGATGGNLIVKPAVKA</sequence>
<accession>B2K5N0</accession>
<protein>
    <recommendedName>
        <fullName evidence="1">Large ribosomal subunit protein uL3</fullName>
    </recommendedName>
    <alternativeName>
        <fullName evidence="3">50S ribosomal protein L3</fullName>
    </alternativeName>
</protein>
<feature type="chain" id="PRO_1000141945" description="Large ribosomal subunit protein uL3">
    <location>
        <begin position="1"/>
        <end position="209"/>
    </location>
</feature>
<feature type="region of interest" description="Disordered" evidence="2">
    <location>
        <begin position="133"/>
        <end position="152"/>
    </location>
</feature>
<feature type="modified residue" description="N5-methylglutamine" evidence="1">
    <location>
        <position position="150"/>
    </location>
</feature>
<keyword id="KW-0488">Methylation</keyword>
<keyword id="KW-0687">Ribonucleoprotein</keyword>
<keyword id="KW-0689">Ribosomal protein</keyword>
<keyword id="KW-0694">RNA-binding</keyword>
<keyword id="KW-0699">rRNA-binding</keyword>
<name>RL3_YERPB</name>
<proteinExistence type="inferred from homology"/>
<dbReference type="EMBL" id="CP001048">
    <property type="protein sequence ID" value="ACC90839.1"/>
    <property type="molecule type" value="Genomic_DNA"/>
</dbReference>
<dbReference type="RefSeq" id="WP_002218932.1">
    <property type="nucleotide sequence ID" value="NZ_CP009780.1"/>
</dbReference>
<dbReference type="SMR" id="B2K5N0"/>
<dbReference type="GeneID" id="96663196"/>
<dbReference type="KEGG" id="ypb:YPTS_3890"/>
<dbReference type="PATRIC" id="fig|502801.10.peg.3355"/>
<dbReference type="GO" id="GO:0022625">
    <property type="term" value="C:cytosolic large ribosomal subunit"/>
    <property type="evidence" value="ECO:0007669"/>
    <property type="project" value="TreeGrafter"/>
</dbReference>
<dbReference type="GO" id="GO:0019843">
    <property type="term" value="F:rRNA binding"/>
    <property type="evidence" value="ECO:0007669"/>
    <property type="project" value="UniProtKB-UniRule"/>
</dbReference>
<dbReference type="GO" id="GO:0003735">
    <property type="term" value="F:structural constituent of ribosome"/>
    <property type="evidence" value="ECO:0007669"/>
    <property type="project" value="InterPro"/>
</dbReference>
<dbReference type="GO" id="GO:0006412">
    <property type="term" value="P:translation"/>
    <property type="evidence" value="ECO:0007669"/>
    <property type="project" value="UniProtKB-UniRule"/>
</dbReference>
<dbReference type="FunFam" id="2.40.30.10:FF:000004">
    <property type="entry name" value="50S ribosomal protein L3"/>
    <property type="match status" value="1"/>
</dbReference>
<dbReference type="FunFam" id="3.30.160.810:FF:000001">
    <property type="entry name" value="50S ribosomal protein L3"/>
    <property type="match status" value="1"/>
</dbReference>
<dbReference type="Gene3D" id="3.30.160.810">
    <property type="match status" value="1"/>
</dbReference>
<dbReference type="Gene3D" id="2.40.30.10">
    <property type="entry name" value="Translation factors"/>
    <property type="match status" value="1"/>
</dbReference>
<dbReference type="HAMAP" id="MF_01325_B">
    <property type="entry name" value="Ribosomal_uL3_B"/>
    <property type="match status" value="1"/>
</dbReference>
<dbReference type="InterPro" id="IPR000597">
    <property type="entry name" value="Ribosomal_uL3"/>
</dbReference>
<dbReference type="InterPro" id="IPR019927">
    <property type="entry name" value="Ribosomal_uL3_bac/org-type"/>
</dbReference>
<dbReference type="InterPro" id="IPR019926">
    <property type="entry name" value="Ribosomal_uL3_CS"/>
</dbReference>
<dbReference type="InterPro" id="IPR009000">
    <property type="entry name" value="Transl_B-barrel_sf"/>
</dbReference>
<dbReference type="NCBIfam" id="TIGR03625">
    <property type="entry name" value="L3_bact"/>
    <property type="match status" value="1"/>
</dbReference>
<dbReference type="PANTHER" id="PTHR11229">
    <property type="entry name" value="50S RIBOSOMAL PROTEIN L3"/>
    <property type="match status" value="1"/>
</dbReference>
<dbReference type="PANTHER" id="PTHR11229:SF16">
    <property type="entry name" value="LARGE RIBOSOMAL SUBUNIT PROTEIN UL3C"/>
    <property type="match status" value="1"/>
</dbReference>
<dbReference type="Pfam" id="PF00297">
    <property type="entry name" value="Ribosomal_L3"/>
    <property type="match status" value="1"/>
</dbReference>
<dbReference type="SUPFAM" id="SSF50447">
    <property type="entry name" value="Translation proteins"/>
    <property type="match status" value="1"/>
</dbReference>
<dbReference type="PROSITE" id="PS00474">
    <property type="entry name" value="RIBOSOMAL_L3"/>
    <property type="match status" value="1"/>
</dbReference>
<gene>
    <name evidence="1" type="primary">rplC</name>
    <name type="ordered locus">YPTS_3890</name>
</gene>
<evidence type="ECO:0000255" key="1">
    <source>
        <dbReference type="HAMAP-Rule" id="MF_01325"/>
    </source>
</evidence>
<evidence type="ECO:0000256" key="2">
    <source>
        <dbReference type="SAM" id="MobiDB-lite"/>
    </source>
</evidence>
<evidence type="ECO:0000305" key="3"/>
<organism>
    <name type="scientific">Yersinia pseudotuberculosis serotype IB (strain PB1/+)</name>
    <dbReference type="NCBI Taxonomy" id="502801"/>
    <lineage>
        <taxon>Bacteria</taxon>
        <taxon>Pseudomonadati</taxon>
        <taxon>Pseudomonadota</taxon>
        <taxon>Gammaproteobacteria</taxon>
        <taxon>Enterobacterales</taxon>
        <taxon>Yersiniaceae</taxon>
        <taxon>Yersinia</taxon>
    </lineage>
</organism>
<comment type="function">
    <text evidence="1">One of the primary rRNA binding proteins, it binds directly near the 3'-end of the 23S rRNA, where it nucleates assembly of the 50S subunit.</text>
</comment>
<comment type="subunit">
    <text evidence="1">Part of the 50S ribosomal subunit. Forms a cluster with proteins L14 and L19.</text>
</comment>
<comment type="PTM">
    <text evidence="1">Methylated by PrmB.</text>
</comment>
<comment type="similarity">
    <text evidence="1">Belongs to the universal ribosomal protein uL3 family.</text>
</comment>
<reference key="1">
    <citation type="submission" date="2008-04" db="EMBL/GenBank/DDBJ databases">
        <title>Complete sequence of Yersinia pseudotuberculosis PB1/+.</title>
        <authorList>
            <person name="Copeland A."/>
            <person name="Lucas S."/>
            <person name="Lapidus A."/>
            <person name="Glavina del Rio T."/>
            <person name="Dalin E."/>
            <person name="Tice H."/>
            <person name="Bruce D."/>
            <person name="Goodwin L."/>
            <person name="Pitluck S."/>
            <person name="Munk A.C."/>
            <person name="Brettin T."/>
            <person name="Detter J.C."/>
            <person name="Han C."/>
            <person name="Tapia R."/>
            <person name="Schmutz J."/>
            <person name="Larimer F."/>
            <person name="Land M."/>
            <person name="Hauser L."/>
            <person name="Challacombe J.F."/>
            <person name="Green L."/>
            <person name="Lindler L.E."/>
            <person name="Nikolich M.P."/>
            <person name="Richardson P."/>
        </authorList>
    </citation>
    <scope>NUCLEOTIDE SEQUENCE [LARGE SCALE GENOMIC DNA]</scope>
    <source>
        <strain>PB1/+</strain>
    </source>
</reference>